<keyword id="KW-0002">3D-structure</keyword>
<keyword id="KW-0007">Acetylation</keyword>
<keyword id="KW-0025">Alternative splicing</keyword>
<keyword id="KW-0067">ATP-binding</keyword>
<keyword id="KW-0235">DNA replication</keyword>
<keyword id="KW-0547">Nucleotide-binding</keyword>
<keyword id="KW-0539">Nucleus</keyword>
<keyword id="KW-1267">Proteomics identification</keyword>
<keyword id="KW-1185">Reference proteome</keyword>
<name>RFC5_HUMAN</name>
<feature type="chain" id="PRO_0000121751" description="Replication factor C subunit 5">
    <location>
        <begin position="1"/>
        <end position="340"/>
    </location>
</feature>
<feature type="binding site" evidence="1">
    <location>
        <begin position="60"/>
        <end position="67"/>
    </location>
    <ligand>
        <name>ATP</name>
        <dbReference type="ChEBI" id="CHEBI:30616"/>
    </ligand>
</feature>
<feature type="modified residue" description="N-acetylmethionine" evidence="8">
    <location>
        <position position="1"/>
    </location>
</feature>
<feature type="splice variant" id="VSP_043067" description="In isoform 2." evidence="6">
    <original>METSALKQQEQPAATKIRNLPW</original>
    <variation>M</variation>
    <location>
        <begin position="1"/>
        <end position="22"/>
    </location>
</feature>
<feature type="sequence variant" id="VAR_018749" description="In dbSNP:rs5745796." evidence="5">
    <original>A</original>
    <variation>T</variation>
    <location>
        <position position="13"/>
    </location>
</feature>
<feature type="helix" evidence="9">
    <location>
        <begin position="5"/>
        <end position="10"/>
    </location>
</feature>
<feature type="strand" evidence="9">
    <location>
        <begin position="16"/>
        <end position="18"/>
    </location>
</feature>
<feature type="helix" evidence="13">
    <location>
        <begin position="22"/>
        <end position="25"/>
    </location>
</feature>
<feature type="helix" evidence="13">
    <location>
        <begin position="31"/>
        <end position="33"/>
    </location>
</feature>
<feature type="helix" evidence="13">
    <location>
        <begin position="38"/>
        <end position="49"/>
    </location>
</feature>
<feature type="strand" evidence="13">
    <location>
        <begin position="56"/>
        <end position="59"/>
    </location>
</feature>
<feature type="helix" evidence="13">
    <location>
        <begin position="66"/>
        <end position="77"/>
    </location>
</feature>
<feature type="strand" evidence="11">
    <location>
        <begin position="80"/>
        <end position="82"/>
    </location>
</feature>
<feature type="turn" evidence="13">
    <location>
        <begin position="84"/>
        <end position="86"/>
    </location>
</feature>
<feature type="strand" evidence="13">
    <location>
        <begin position="87"/>
        <end position="90"/>
    </location>
</feature>
<feature type="turn" evidence="10">
    <location>
        <begin position="92"/>
        <end position="94"/>
    </location>
</feature>
<feature type="helix" evidence="13">
    <location>
        <begin position="98"/>
        <end position="101"/>
    </location>
</feature>
<feature type="helix" evidence="13">
    <location>
        <begin position="104"/>
        <end position="110"/>
    </location>
</feature>
<feature type="strand" evidence="13">
    <location>
        <begin position="114"/>
        <end position="116"/>
    </location>
</feature>
<feature type="strand" evidence="13">
    <location>
        <begin position="120"/>
        <end position="126"/>
    </location>
</feature>
<feature type="helix" evidence="13">
    <location>
        <begin position="127"/>
        <end position="129"/>
    </location>
</feature>
<feature type="helix" evidence="13">
    <location>
        <begin position="132"/>
        <end position="137"/>
    </location>
</feature>
<feature type="helix" evidence="13">
    <location>
        <begin position="139"/>
        <end position="144"/>
    </location>
</feature>
<feature type="turn" evidence="13">
    <location>
        <begin position="145"/>
        <end position="148"/>
    </location>
</feature>
<feature type="strand" evidence="13">
    <location>
        <begin position="149"/>
        <end position="156"/>
    </location>
</feature>
<feature type="helix" evidence="13">
    <location>
        <begin position="158"/>
        <end position="160"/>
    </location>
</feature>
<feature type="helix" evidence="13">
    <location>
        <begin position="163"/>
        <end position="168"/>
    </location>
</feature>
<feature type="strand" evidence="13">
    <location>
        <begin position="169"/>
        <end position="173"/>
    </location>
</feature>
<feature type="helix" evidence="13">
    <location>
        <begin position="179"/>
        <end position="193"/>
    </location>
</feature>
<feature type="helix" evidence="13">
    <location>
        <begin position="199"/>
        <end position="209"/>
    </location>
</feature>
<feature type="helix" evidence="13">
    <location>
        <begin position="213"/>
        <end position="226"/>
    </location>
</feature>
<feature type="strand" evidence="13">
    <location>
        <begin position="228"/>
        <end position="230"/>
    </location>
</feature>
<feature type="helix" evidence="13">
    <location>
        <begin position="232"/>
        <end position="238"/>
    </location>
</feature>
<feature type="helix" evidence="13">
    <location>
        <begin position="244"/>
        <end position="256"/>
    </location>
</feature>
<feature type="helix" evidence="13">
    <location>
        <begin position="259"/>
        <end position="273"/>
    </location>
</feature>
<feature type="helix" evidence="13">
    <location>
        <begin position="277"/>
        <end position="290"/>
    </location>
</feature>
<feature type="helix" evidence="13">
    <location>
        <begin position="295"/>
        <end position="311"/>
    </location>
</feature>
<feature type="turn" evidence="12">
    <location>
        <begin position="313"/>
        <end position="315"/>
    </location>
</feature>
<feature type="helix" evidence="13">
    <location>
        <begin position="318"/>
        <end position="339"/>
    </location>
</feature>
<evidence type="ECO:0000255" key="1"/>
<evidence type="ECO:0000269" key="2">
    <source>
    </source>
</evidence>
<evidence type="ECO:0000269" key="3">
    <source>
    </source>
</evidence>
<evidence type="ECO:0000269" key="4">
    <source>
    </source>
</evidence>
<evidence type="ECO:0000269" key="5">
    <source ref="2"/>
</evidence>
<evidence type="ECO:0000303" key="6">
    <source>
    </source>
</evidence>
<evidence type="ECO:0000305" key="7"/>
<evidence type="ECO:0007744" key="8">
    <source>
    </source>
</evidence>
<evidence type="ECO:0007829" key="9">
    <source>
        <dbReference type="PDB" id="8UI8"/>
    </source>
</evidence>
<evidence type="ECO:0007829" key="10">
    <source>
        <dbReference type="PDB" id="8UII"/>
    </source>
</evidence>
<evidence type="ECO:0007829" key="11">
    <source>
        <dbReference type="PDB" id="8UMT"/>
    </source>
</evidence>
<evidence type="ECO:0007829" key="12">
    <source>
        <dbReference type="PDB" id="8UMU"/>
    </source>
</evidence>
<evidence type="ECO:0007829" key="13">
    <source>
        <dbReference type="PDB" id="8UMY"/>
    </source>
</evidence>
<dbReference type="EMBL" id="L07540">
    <property type="protein sequence ID" value="AAB09784.1"/>
    <property type="molecule type" value="mRNA"/>
</dbReference>
<dbReference type="EMBL" id="AY254323">
    <property type="protein sequence ID" value="AAO63493.1"/>
    <property type="molecule type" value="Genomic_DNA"/>
</dbReference>
<dbReference type="EMBL" id="AK094575">
    <property type="protein sequence ID" value="BAG52890.1"/>
    <property type="molecule type" value="mRNA"/>
</dbReference>
<dbReference type="EMBL" id="AC131159">
    <property type="status" value="NOT_ANNOTATED_CDS"/>
    <property type="molecule type" value="Genomic_DNA"/>
</dbReference>
<dbReference type="EMBL" id="BC001866">
    <property type="protein sequence ID" value="AAH01866.1"/>
    <property type="molecule type" value="mRNA"/>
</dbReference>
<dbReference type="EMBL" id="BC013961">
    <property type="protein sequence ID" value="AAH13961.1"/>
    <property type="molecule type" value="mRNA"/>
</dbReference>
<dbReference type="CCDS" id="CCDS41843.2">
    <molecule id="P40937-2"/>
</dbReference>
<dbReference type="CCDS" id="CCDS9185.1">
    <molecule id="P40937-1"/>
</dbReference>
<dbReference type="RefSeq" id="NP_001123584.1">
    <property type="nucleotide sequence ID" value="NM_001130112.3"/>
</dbReference>
<dbReference type="RefSeq" id="NP_001123585.1">
    <molecule id="P40937-2"/>
    <property type="nucleotide sequence ID" value="NM_001130113.3"/>
</dbReference>
<dbReference type="RefSeq" id="NP_031396.1">
    <molecule id="P40937-1"/>
    <property type="nucleotide sequence ID" value="NM_007370.7"/>
</dbReference>
<dbReference type="RefSeq" id="NP_853556.2">
    <molecule id="P40937-2"/>
    <property type="nucleotide sequence ID" value="NM_181578.5"/>
</dbReference>
<dbReference type="RefSeq" id="XP_011536945.1">
    <property type="nucleotide sequence ID" value="XM_011538643.2"/>
</dbReference>
<dbReference type="RefSeq" id="XP_011536947.1">
    <property type="nucleotide sequence ID" value="XM_011538645.2"/>
</dbReference>
<dbReference type="PDB" id="6VVO">
    <property type="method" value="EM"/>
    <property type="resolution" value="3.40 A"/>
    <property type="chains" value="C=1-340"/>
</dbReference>
<dbReference type="PDB" id="7Z6H">
    <property type="method" value="EM"/>
    <property type="resolution" value="3.59 A"/>
    <property type="chains" value="G=2-340"/>
</dbReference>
<dbReference type="PDB" id="8UI7">
    <property type="method" value="EM"/>
    <property type="resolution" value="4.20 A"/>
    <property type="chains" value="C=1-340"/>
</dbReference>
<dbReference type="PDB" id="8UI8">
    <property type="method" value="EM"/>
    <property type="resolution" value="3.10 A"/>
    <property type="chains" value="C=1-340"/>
</dbReference>
<dbReference type="PDB" id="8UI9">
    <property type="method" value="EM"/>
    <property type="resolution" value="3.50 A"/>
    <property type="chains" value="C=1-340"/>
</dbReference>
<dbReference type="PDB" id="8UII">
    <property type="method" value="EM"/>
    <property type="resolution" value="3.04 A"/>
    <property type="chains" value="C=1-340"/>
</dbReference>
<dbReference type="PDB" id="8UMT">
    <property type="method" value="EM"/>
    <property type="resolution" value="3.33 A"/>
    <property type="chains" value="C=1-340"/>
</dbReference>
<dbReference type="PDB" id="8UMU">
    <property type="method" value="EM"/>
    <property type="resolution" value="3.16 A"/>
    <property type="chains" value="C=1-340"/>
</dbReference>
<dbReference type="PDB" id="8UMV">
    <property type="method" value="EM"/>
    <property type="resolution" value="2.75 A"/>
    <property type="chains" value="C=1-340"/>
</dbReference>
<dbReference type="PDB" id="8UMW">
    <property type="method" value="EM"/>
    <property type="resolution" value="2.93 A"/>
    <property type="chains" value="C=1-340"/>
</dbReference>
<dbReference type="PDB" id="8UMY">
    <property type="method" value="EM"/>
    <property type="resolution" value="2.83 A"/>
    <property type="chains" value="C=1-340"/>
</dbReference>
<dbReference type="PDB" id="8UN0">
    <property type="method" value="EM"/>
    <property type="resolution" value="3.00 A"/>
    <property type="chains" value="C=1-340"/>
</dbReference>
<dbReference type="PDB" id="8UNJ">
    <property type="method" value="EM"/>
    <property type="resolution" value="3.35 A"/>
    <property type="chains" value="C=1-340"/>
</dbReference>
<dbReference type="PDBsum" id="6VVO"/>
<dbReference type="PDBsum" id="7Z6H"/>
<dbReference type="PDBsum" id="8UI7"/>
<dbReference type="PDBsum" id="8UI8"/>
<dbReference type="PDBsum" id="8UI9"/>
<dbReference type="PDBsum" id="8UII"/>
<dbReference type="PDBsum" id="8UMT"/>
<dbReference type="PDBsum" id="8UMU"/>
<dbReference type="PDBsum" id="8UMV"/>
<dbReference type="PDBsum" id="8UMW"/>
<dbReference type="PDBsum" id="8UMY"/>
<dbReference type="PDBsum" id="8UN0"/>
<dbReference type="PDBsum" id="8UNJ"/>
<dbReference type="EMDB" id="EMD-14527"/>
<dbReference type="EMDB" id="EMD-21405"/>
<dbReference type="EMDB" id="EMD-42287"/>
<dbReference type="EMDB" id="EMD-42288"/>
<dbReference type="EMDB" id="EMD-42289"/>
<dbReference type="EMDB" id="EMD-42295"/>
<dbReference type="EMDB" id="EMD-42383"/>
<dbReference type="EMDB" id="EMD-42384"/>
<dbReference type="EMDB" id="EMD-42385"/>
<dbReference type="EMDB" id="EMD-42386"/>
<dbReference type="EMDB" id="EMD-42388"/>
<dbReference type="EMDB" id="EMD-42389"/>
<dbReference type="EMDB" id="EMD-42406"/>
<dbReference type="SMR" id="P40937"/>
<dbReference type="BioGRID" id="111917">
    <property type="interactions" value="220"/>
</dbReference>
<dbReference type="ComplexPortal" id="CPX-415">
    <property type="entry name" value="DNA replication factor C complex"/>
</dbReference>
<dbReference type="ComplexPortal" id="CPX-7931">
    <property type="entry name" value="DNA replication factor C complex, RAD17 variant"/>
</dbReference>
<dbReference type="CORUM" id="P40937"/>
<dbReference type="DIP" id="DIP-36433N"/>
<dbReference type="FunCoup" id="P40937">
    <property type="interactions" value="2494"/>
</dbReference>
<dbReference type="IntAct" id="P40937">
    <property type="interactions" value="123"/>
</dbReference>
<dbReference type="MINT" id="P40937"/>
<dbReference type="STRING" id="9606.ENSP00000408295"/>
<dbReference type="ChEMBL" id="CHEMBL4296000"/>
<dbReference type="GlyGen" id="P40937">
    <property type="glycosylation" value="2 sites, 1 N-linked glycan (1 site), 1 O-linked glycan (1 site)"/>
</dbReference>
<dbReference type="iPTMnet" id="P40937"/>
<dbReference type="MetOSite" id="P40937"/>
<dbReference type="PhosphoSitePlus" id="P40937"/>
<dbReference type="BioMuta" id="RFC5"/>
<dbReference type="DMDM" id="728777"/>
<dbReference type="jPOST" id="P40937"/>
<dbReference type="MassIVE" id="P40937"/>
<dbReference type="PaxDb" id="9606-ENSP00000408295"/>
<dbReference type="PeptideAtlas" id="P40937"/>
<dbReference type="ProteomicsDB" id="55389">
    <molecule id="P40937-1"/>
</dbReference>
<dbReference type="ProteomicsDB" id="55390">
    <molecule id="P40937-2"/>
</dbReference>
<dbReference type="Pumba" id="P40937"/>
<dbReference type="Antibodypedia" id="18857">
    <property type="antibodies" value="124 antibodies from 30 providers"/>
</dbReference>
<dbReference type="DNASU" id="5985"/>
<dbReference type="Ensembl" id="ENST00000392542.6">
    <molecule id="P40937-2"/>
    <property type="protein sequence ID" value="ENSP00000376325.2"/>
    <property type="gene ID" value="ENSG00000111445.14"/>
</dbReference>
<dbReference type="Ensembl" id="ENST00000454402.7">
    <molecule id="P40937-1"/>
    <property type="protein sequence ID" value="ENSP00000408295.2"/>
    <property type="gene ID" value="ENSG00000111445.14"/>
</dbReference>
<dbReference type="GeneID" id="5985"/>
<dbReference type="KEGG" id="hsa:5985"/>
<dbReference type="MANE-Select" id="ENST00000454402.7">
    <property type="protein sequence ID" value="ENSP00000408295.2"/>
    <property type="RefSeq nucleotide sequence ID" value="NM_007370.7"/>
    <property type="RefSeq protein sequence ID" value="NP_031396.1"/>
</dbReference>
<dbReference type="UCSC" id="uc001twq.4">
    <molecule id="P40937-1"/>
    <property type="organism name" value="human"/>
</dbReference>
<dbReference type="AGR" id="HGNC:9973"/>
<dbReference type="CTD" id="5985"/>
<dbReference type="DisGeNET" id="5985"/>
<dbReference type="GeneCards" id="RFC5"/>
<dbReference type="HGNC" id="HGNC:9973">
    <property type="gene designation" value="RFC5"/>
</dbReference>
<dbReference type="HPA" id="ENSG00000111445">
    <property type="expression patterns" value="Low tissue specificity"/>
</dbReference>
<dbReference type="MIM" id="600407">
    <property type="type" value="gene"/>
</dbReference>
<dbReference type="neXtProt" id="NX_P40937"/>
<dbReference type="OpenTargets" id="ENSG00000111445"/>
<dbReference type="PharmGKB" id="PA34342"/>
<dbReference type="VEuPathDB" id="HostDB:ENSG00000111445"/>
<dbReference type="eggNOG" id="KOG0990">
    <property type="taxonomic scope" value="Eukaryota"/>
</dbReference>
<dbReference type="GeneTree" id="ENSGT00550000075072"/>
<dbReference type="HOGENOM" id="CLU_042324_2_0_1"/>
<dbReference type="InParanoid" id="P40937"/>
<dbReference type="OMA" id="AEDNLPW"/>
<dbReference type="OrthoDB" id="10254700at2759"/>
<dbReference type="PAN-GO" id="P40937">
    <property type="GO annotations" value="5 GO annotations based on evolutionary models"/>
</dbReference>
<dbReference type="PhylomeDB" id="P40937"/>
<dbReference type="TreeFam" id="TF300810"/>
<dbReference type="BRENDA" id="3.6.4.B8">
    <property type="organism ID" value="2681"/>
</dbReference>
<dbReference type="PathwayCommons" id="P40937"/>
<dbReference type="Reactome" id="R-HSA-110312">
    <property type="pathway name" value="Translesion synthesis by REV1"/>
</dbReference>
<dbReference type="Reactome" id="R-HSA-110314">
    <property type="pathway name" value="Recognition of DNA damage by PCNA-containing replication complex"/>
</dbReference>
<dbReference type="Reactome" id="R-HSA-110320">
    <property type="pathway name" value="Translesion Synthesis by POLH"/>
</dbReference>
<dbReference type="Reactome" id="R-HSA-174411">
    <property type="pathway name" value="Polymerase switching on the C-strand of the telomere"/>
</dbReference>
<dbReference type="Reactome" id="R-HSA-176187">
    <property type="pathway name" value="Activation of ATR in response to replication stress"/>
</dbReference>
<dbReference type="Reactome" id="R-HSA-5651801">
    <property type="pathway name" value="PCNA-Dependent Long Patch Base Excision Repair"/>
</dbReference>
<dbReference type="Reactome" id="R-HSA-5655862">
    <property type="pathway name" value="Translesion synthesis by POLK"/>
</dbReference>
<dbReference type="Reactome" id="R-HSA-5656121">
    <property type="pathway name" value="Translesion synthesis by POLI"/>
</dbReference>
<dbReference type="Reactome" id="R-HSA-5656169">
    <property type="pathway name" value="Termination of translesion DNA synthesis"/>
</dbReference>
<dbReference type="Reactome" id="R-HSA-5685938">
    <property type="pathway name" value="HDR through Single Strand Annealing (SSA)"/>
</dbReference>
<dbReference type="Reactome" id="R-HSA-5685942">
    <property type="pathway name" value="HDR through Homologous Recombination (HRR)"/>
</dbReference>
<dbReference type="Reactome" id="R-HSA-5693607">
    <property type="pathway name" value="Processing of DNA double-strand break ends"/>
</dbReference>
<dbReference type="Reactome" id="R-HSA-5693616">
    <property type="pathway name" value="Presynaptic phase of homologous DNA pairing and strand exchange"/>
</dbReference>
<dbReference type="Reactome" id="R-HSA-5696397">
    <property type="pathway name" value="Gap-filling DNA repair synthesis and ligation in GG-NER"/>
</dbReference>
<dbReference type="Reactome" id="R-HSA-5696400">
    <property type="pathway name" value="Dual Incision in GG-NER"/>
</dbReference>
<dbReference type="Reactome" id="R-HSA-6782135">
    <property type="pathway name" value="Dual incision in TC-NER"/>
</dbReference>
<dbReference type="Reactome" id="R-HSA-6782210">
    <property type="pathway name" value="Gap-filling DNA repair synthesis and ligation in TC-NER"/>
</dbReference>
<dbReference type="Reactome" id="R-HSA-6804756">
    <property type="pathway name" value="Regulation of TP53 Activity through Phosphorylation"/>
</dbReference>
<dbReference type="Reactome" id="R-HSA-69091">
    <property type="pathway name" value="Polymerase switching"/>
</dbReference>
<dbReference type="Reactome" id="R-HSA-69473">
    <property type="pathway name" value="G2/M DNA damage checkpoint"/>
</dbReference>
<dbReference type="Reactome" id="R-HSA-9709570">
    <property type="pathway name" value="Impaired BRCA2 binding to RAD51"/>
</dbReference>
<dbReference type="SignaLink" id="P40937"/>
<dbReference type="SIGNOR" id="P40937"/>
<dbReference type="BioGRID-ORCS" id="5985">
    <property type="hits" value="811 hits in 1165 CRISPR screens"/>
</dbReference>
<dbReference type="CD-CODE" id="91857CE7">
    <property type="entry name" value="Nucleolus"/>
</dbReference>
<dbReference type="ChiTaRS" id="RFC5">
    <property type="organism name" value="human"/>
</dbReference>
<dbReference type="GeneWiki" id="RFC5"/>
<dbReference type="GenomeRNAi" id="5985"/>
<dbReference type="Pharos" id="P40937">
    <property type="development level" value="Tbio"/>
</dbReference>
<dbReference type="PRO" id="PR:P40937"/>
<dbReference type="Proteomes" id="UP000005640">
    <property type="component" value="Chromosome 12"/>
</dbReference>
<dbReference type="RNAct" id="P40937">
    <property type="molecule type" value="protein"/>
</dbReference>
<dbReference type="Bgee" id="ENSG00000111445">
    <property type="expression patterns" value="Expressed in pons and 220 other cell types or tissues"/>
</dbReference>
<dbReference type="ExpressionAtlas" id="P40937">
    <property type="expression patterns" value="baseline and differential"/>
</dbReference>
<dbReference type="GO" id="GO:0031390">
    <property type="term" value="C:Ctf18 RFC-like complex"/>
    <property type="evidence" value="ECO:0000314"/>
    <property type="project" value="UniProtKB"/>
</dbReference>
<dbReference type="GO" id="GO:0005663">
    <property type="term" value="C:DNA replication factor C complex"/>
    <property type="evidence" value="ECO:0000314"/>
    <property type="project" value="UniProtKB"/>
</dbReference>
<dbReference type="GO" id="GO:0005654">
    <property type="term" value="C:nucleoplasm"/>
    <property type="evidence" value="ECO:0000304"/>
    <property type="project" value="Reactome"/>
</dbReference>
<dbReference type="GO" id="GO:0005634">
    <property type="term" value="C:nucleus"/>
    <property type="evidence" value="ECO:0000318"/>
    <property type="project" value="GO_Central"/>
</dbReference>
<dbReference type="GO" id="GO:0005524">
    <property type="term" value="F:ATP binding"/>
    <property type="evidence" value="ECO:0007669"/>
    <property type="project" value="UniProtKB-KW"/>
</dbReference>
<dbReference type="GO" id="GO:0016887">
    <property type="term" value="F:ATP hydrolysis activity"/>
    <property type="evidence" value="ECO:0007669"/>
    <property type="project" value="InterPro"/>
</dbReference>
<dbReference type="GO" id="GO:0003677">
    <property type="term" value="F:DNA binding"/>
    <property type="evidence" value="ECO:0007669"/>
    <property type="project" value="InterPro"/>
</dbReference>
<dbReference type="GO" id="GO:0019899">
    <property type="term" value="F:enzyme binding"/>
    <property type="evidence" value="ECO:0000303"/>
    <property type="project" value="UniProtKB"/>
</dbReference>
<dbReference type="GO" id="GO:0006281">
    <property type="term" value="P:DNA repair"/>
    <property type="evidence" value="ECO:0000318"/>
    <property type="project" value="GO_Central"/>
</dbReference>
<dbReference type="GO" id="GO:0006260">
    <property type="term" value="P:DNA replication"/>
    <property type="evidence" value="ECO:0000303"/>
    <property type="project" value="UniProtKB"/>
</dbReference>
<dbReference type="GO" id="GO:0006261">
    <property type="term" value="P:DNA-templated DNA replication"/>
    <property type="evidence" value="ECO:0000314"/>
    <property type="project" value="ComplexPortal"/>
</dbReference>
<dbReference type="GO" id="GO:1900264">
    <property type="term" value="P:positive regulation of DNA-directed DNA polymerase activity"/>
    <property type="evidence" value="ECO:0000314"/>
    <property type="project" value="UniProtKB"/>
</dbReference>
<dbReference type="CDD" id="cd00009">
    <property type="entry name" value="AAA"/>
    <property type="match status" value="1"/>
</dbReference>
<dbReference type="CDD" id="cd18140">
    <property type="entry name" value="HLD_clamp_RFC"/>
    <property type="match status" value="1"/>
</dbReference>
<dbReference type="FunFam" id="3.40.50.300:FF:001637">
    <property type="entry name" value="replication factor C subunit 2 isoform X2"/>
    <property type="match status" value="1"/>
</dbReference>
<dbReference type="FunFam" id="1.10.8.60:FF:000028">
    <property type="entry name" value="Replication factor C subunit 5"/>
    <property type="match status" value="1"/>
</dbReference>
<dbReference type="FunFam" id="1.20.272.10:FF:000004">
    <property type="entry name" value="Replication factor C subunit 5"/>
    <property type="match status" value="1"/>
</dbReference>
<dbReference type="FunFam" id="3.40.50.300:FF:001987">
    <property type="entry name" value="replication factor C subunit 5 isoform X2"/>
    <property type="match status" value="1"/>
</dbReference>
<dbReference type="Gene3D" id="1.10.8.60">
    <property type="match status" value="1"/>
</dbReference>
<dbReference type="Gene3D" id="1.20.272.10">
    <property type="match status" value="1"/>
</dbReference>
<dbReference type="Gene3D" id="3.40.50.300">
    <property type="entry name" value="P-loop containing nucleotide triphosphate hydrolases"/>
    <property type="match status" value="1"/>
</dbReference>
<dbReference type="InterPro" id="IPR003593">
    <property type="entry name" value="AAA+_ATPase"/>
</dbReference>
<dbReference type="InterPro" id="IPR003959">
    <property type="entry name" value="ATPase_AAA_core"/>
</dbReference>
<dbReference type="InterPro" id="IPR008921">
    <property type="entry name" value="DNA_pol3_clamp-load_cplx_C"/>
</dbReference>
<dbReference type="InterPro" id="IPR050238">
    <property type="entry name" value="DNA_Rep/Repair_Clamp_Loader"/>
</dbReference>
<dbReference type="InterPro" id="IPR027417">
    <property type="entry name" value="P-loop_NTPase"/>
</dbReference>
<dbReference type="InterPro" id="IPR013748">
    <property type="entry name" value="Rep_factorC_C"/>
</dbReference>
<dbReference type="InterPro" id="IPR047854">
    <property type="entry name" value="RFC_lid"/>
</dbReference>
<dbReference type="NCBIfam" id="NF001679">
    <property type="entry name" value="PRK00440.1"/>
    <property type="match status" value="1"/>
</dbReference>
<dbReference type="PANTHER" id="PTHR11669">
    <property type="entry name" value="REPLICATION FACTOR C / DNA POLYMERASE III GAMMA-TAU SUBUNIT"/>
    <property type="match status" value="1"/>
</dbReference>
<dbReference type="PANTHER" id="PTHR11669:SF9">
    <property type="entry name" value="REPLICATION FACTOR C SUBUNIT 5"/>
    <property type="match status" value="1"/>
</dbReference>
<dbReference type="Pfam" id="PF00004">
    <property type="entry name" value="AAA"/>
    <property type="match status" value="1"/>
</dbReference>
<dbReference type="Pfam" id="PF21960">
    <property type="entry name" value="RCF1-5-like_lid"/>
    <property type="match status" value="1"/>
</dbReference>
<dbReference type="Pfam" id="PF08542">
    <property type="entry name" value="Rep_fac_C"/>
    <property type="match status" value="1"/>
</dbReference>
<dbReference type="SMART" id="SM00382">
    <property type="entry name" value="AAA"/>
    <property type="match status" value="1"/>
</dbReference>
<dbReference type="SUPFAM" id="SSF52540">
    <property type="entry name" value="P-loop containing nucleoside triphosphate hydrolases"/>
    <property type="match status" value="1"/>
</dbReference>
<dbReference type="SUPFAM" id="SSF48019">
    <property type="entry name" value="post-AAA+ oligomerization domain-like"/>
    <property type="match status" value="1"/>
</dbReference>
<comment type="function">
    <text evidence="3 4">Subunit of the replication factor C (RFC) complex which acts during elongation of primed DNA templates by DNA polymerases delta and epsilon, and is necessary for ATP-dependent loading of proliferating cell nuclear antigen (PCNA) onto primed DNA.</text>
</comment>
<comment type="subunit">
    <text evidence="2 3 4">Subunit of the RFC complex, an heteropentameric complex consisting of a large subunit RFC1 and four small subunits RFC2, RFC3, RFC4 and RFC5; the RFC complex interacts with PCNA (PubMed:8999859, PubMed:9488738). Forms an heterotetrameric complex with RFC2, RFC3 and RFC4; this complex has ATPase activity but is not stimulated by PCNA (PubMed:9488738). The heterotetramer of subunits RFC2, RFC3, RFC4 and RFC5 interacts with RAD17 (PubMed:11572977).</text>
</comment>
<comment type="interaction">
    <interactant intactId="EBI-712376">
        <id>P40937</id>
    </interactant>
    <interactant intactId="EBI-948603">
        <id>Q03989</id>
        <label>ARID5A</label>
    </interactant>
    <organismsDiffer>false</organismsDiffer>
    <experiments>3</experiments>
</comment>
<comment type="interaction">
    <interactant intactId="EBI-712376">
        <id>P40937</id>
    </interactant>
    <interactant intactId="EBI-514538">
        <id>Q13490</id>
        <label>BIRC2</label>
    </interactant>
    <organismsDiffer>false</organismsDiffer>
    <experiments>3</experiments>
</comment>
<comment type="interaction">
    <interactant intactId="EBI-712376">
        <id>P40937</id>
    </interactant>
    <interactant intactId="EBI-2548012">
        <id>Q9H2G9</id>
        <label>BLZF1</label>
    </interactant>
    <organismsDiffer>false</organismsDiffer>
    <experiments>3</experiments>
</comment>
<comment type="interaction">
    <interactant intactId="EBI-712376">
        <id>P40937</id>
    </interactant>
    <interactant intactId="EBI-395261">
        <id>P24863</id>
        <label>CCNC</label>
    </interactant>
    <organismsDiffer>false</organismsDiffer>
    <experiments>5</experiments>
</comment>
<comment type="interaction">
    <interactant intactId="EBI-712376">
        <id>P40937</id>
    </interactant>
    <interactant intactId="EBI-12160437">
        <id>A8MTA8-2</id>
        <label>CIMIP2B</label>
    </interactant>
    <organismsDiffer>false</organismsDiffer>
    <experiments>3</experiments>
</comment>
<comment type="interaction">
    <interactant intactId="EBI-712376">
        <id>P40937</id>
    </interactant>
    <interactant intactId="EBI-742054">
        <id>Q96D03</id>
        <label>DDIT4L</label>
    </interactant>
    <organismsDiffer>false</organismsDiffer>
    <experiments>5</experiments>
</comment>
<comment type="interaction">
    <interactant intactId="EBI-712376">
        <id>P40937</id>
    </interactant>
    <interactant intactId="EBI-12112376">
        <id>A0A0C4DGQ7</id>
        <label>EML2</label>
    </interactant>
    <organismsDiffer>false</organismsDiffer>
    <experiments>3</experiments>
</comment>
<comment type="interaction">
    <interactant intactId="EBI-712376">
        <id>P40937</id>
    </interactant>
    <interactant intactId="EBI-371922">
        <id>Q96B26</id>
        <label>EXOSC8</label>
    </interactant>
    <organismsDiffer>false</organismsDiffer>
    <experiments>3</experiments>
</comment>
<comment type="interaction">
    <interactant intactId="EBI-712376">
        <id>P40937</id>
    </interactant>
    <interactant intactId="EBI-1047093">
        <id>O76011</id>
        <label>KRT34</label>
    </interactant>
    <organismsDiffer>false</organismsDiffer>
    <experiments>3</experiments>
</comment>
<comment type="interaction">
    <interactant intactId="EBI-712376">
        <id>P40937</id>
    </interactant>
    <interactant intactId="EBI-11742507">
        <id>Q8TAP4-4</id>
        <label>LMO3</label>
    </interactant>
    <organismsDiffer>false</organismsDiffer>
    <experiments>3</experiments>
</comment>
<comment type="interaction">
    <interactant intactId="EBI-712376">
        <id>P40937</id>
    </interactant>
    <interactant intactId="EBI-399266">
        <id>Q9HAF1</id>
        <label>MEAF6</label>
    </interactant>
    <organismsDiffer>false</organismsDiffer>
    <experiments>3</experiments>
</comment>
<comment type="interaction">
    <interactant intactId="EBI-712376">
        <id>P40937</id>
    </interactant>
    <interactant intactId="EBI-2512055">
        <id>O15049</id>
        <label>N4BP3</label>
    </interactant>
    <organismsDiffer>false</organismsDiffer>
    <experiments>5</experiments>
</comment>
<comment type="interaction">
    <interactant intactId="EBI-712376">
        <id>P40937</id>
    </interactant>
    <interactant intactId="EBI-8641936">
        <id>Q15742</id>
        <label>NAB2</label>
    </interactant>
    <organismsDiffer>false</organismsDiffer>
    <experiments>8</experiments>
</comment>
<comment type="interaction">
    <interactant intactId="EBI-712376">
        <id>P40937</id>
    </interactant>
    <interactant intactId="EBI-874629">
        <id>Q13285</id>
        <label>NR5A1</label>
    </interactant>
    <organismsDiffer>false</organismsDiffer>
    <experiments>3</experiments>
</comment>
<comment type="interaction">
    <interactant intactId="EBI-712376">
        <id>P40937</id>
    </interactant>
    <interactant intactId="EBI-10293968">
        <id>Q96T49</id>
        <label>PPP1R16B</label>
    </interactant>
    <organismsDiffer>false</organismsDiffer>
    <experiments>3</experiments>
</comment>
<comment type="interaction">
    <interactant intactId="EBI-712376">
        <id>P40937</id>
    </interactant>
    <interactant intactId="EBI-476655">
        <id>P35249</id>
        <label>RFC4</label>
    </interactant>
    <organismsDiffer>false</organismsDiffer>
    <experiments>25</experiments>
</comment>
<comment type="interaction">
    <interactant intactId="EBI-712376">
        <id>P40937</id>
    </interactant>
    <interactant intactId="EBI-745958">
        <id>Q5VWN6</id>
        <label>TASOR2</label>
    </interactant>
    <organismsDiffer>false</organismsDiffer>
    <experiments>3</experiments>
</comment>
<comment type="interaction">
    <interactant intactId="EBI-712376">
        <id>P40937</id>
    </interactant>
    <interactant intactId="EBI-2130415">
        <id>O00635</id>
        <label>TRIM38</label>
    </interactant>
    <organismsDiffer>false</organismsDiffer>
    <experiments>8</experiments>
</comment>
<comment type="interaction">
    <interactant intactId="EBI-712376">
        <id>P40937</id>
    </interactant>
    <interactant intactId="EBI-21353855">
        <id>Q99598</id>
        <label>TSNAX</label>
    </interactant>
    <organismsDiffer>false</organismsDiffer>
    <experiments>3</experiments>
</comment>
<comment type="interaction">
    <interactant intactId="EBI-712376">
        <id>P40937</id>
    </interactant>
    <interactant intactId="EBI-2815120">
        <id>Q6GPH4</id>
        <label>XAF1</label>
    </interactant>
    <organismsDiffer>false</organismsDiffer>
    <experiments>3</experiments>
</comment>
<comment type="interaction">
    <interactant intactId="EBI-712376">
        <id>P40937</id>
    </interactant>
    <interactant intactId="EBI-517127">
        <id>P98170</id>
        <label>XIAP</label>
    </interactant>
    <organismsDiffer>false</organismsDiffer>
    <experiments>9</experiments>
</comment>
<comment type="interaction">
    <interactant intactId="EBI-712376">
        <id>P40937</id>
    </interactant>
    <interactant intactId="EBI-12884200">
        <id>P17023</id>
        <label>ZNF19</label>
    </interactant>
    <organismsDiffer>false</organismsDiffer>
    <experiments>5</experiments>
</comment>
<comment type="interaction">
    <interactant intactId="EBI-712376">
        <id>P40937</id>
    </interactant>
    <interactant intactId="EBI-743265">
        <id>Q9BUY5</id>
        <label>ZNF426</label>
    </interactant>
    <organismsDiffer>false</organismsDiffer>
    <experiments>3</experiments>
</comment>
<comment type="subcellular location">
    <subcellularLocation>
        <location evidence="7">Nucleus</location>
    </subcellularLocation>
</comment>
<comment type="alternative products">
    <event type="alternative splicing"/>
    <isoform>
        <id>P40937-1</id>
        <name>1</name>
        <sequence type="displayed"/>
    </isoform>
    <isoform>
        <id>P40937-2</id>
        <name>2</name>
        <sequence type="described" ref="VSP_043067"/>
    </isoform>
</comment>
<comment type="similarity">
    <text evidence="7">Belongs to the activator 1 small subunits family.</text>
</comment>
<organism>
    <name type="scientific">Homo sapiens</name>
    <name type="common">Human</name>
    <dbReference type="NCBI Taxonomy" id="9606"/>
    <lineage>
        <taxon>Eukaryota</taxon>
        <taxon>Metazoa</taxon>
        <taxon>Chordata</taxon>
        <taxon>Craniata</taxon>
        <taxon>Vertebrata</taxon>
        <taxon>Euteleostomi</taxon>
        <taxon>Mammalia</taxon>
        <taxon>Eutheria</taxon>
        <taxon>Euarchontoglires</taxon>
        <taxon>Primates</taxon>
        <taxon>Haplorrhini</taxon>
        <taxon>Catarrhini</taxon>
        <taxon>Hominidae</taxon>
        <taxon>Homo</taxon>
    </lineage>
</organism>
<proteinExistence type="evidence at protein level"/>
<gene>
    <name type="primary">RFC5</name>
</gene>
<protein>
    <recommendedName>
        <fullName>Replication factor C subunit 5</fullName>
    </recommendedName>
    <alternativeName>
        <fullName>Activator 1 36 kDa subunit</fullName>
        <shortName>A1 36 kDa subunit</shortName>
    </alternativeName>
    <alternativeName>
        <fullName>Activator 1 subunit 5</fullName>
    </alternativeName>
    <alternativeName>
        <fullName>Replication factor C 36 kDa subunit</fullName>
        <shortName>RF-C 36 kDa subunit</shortName>
        <shortName>RFC36</shortName>
    </alternativeName>
</protein>
<accession>P40937</accession>
<accession>A8MZ62</accession>
<accession>B3KSX8</accession>
<reference key="1">
    <citation type="journal article" date="1993" name="Nucleic Acids Res.">
        <title>Homology in accessory proteins of replicative polymerases -- E. coli to humans.</title>
        <authorList>
            <person name="O'Donnell M."/>
            <person name="Onrust R."/>
            <person name="Dean F.B."/>
            <person name="Chen M."/>
            <person name="Hurwitz J."/>
        </authorList>
    </citation>
    <scope>NUCLEOTIDE SEQUENCE [MRNA] (ISOFORM 1)</scope>
</reference>
<reference key="2">
    <citation type="submission" date="2003-03" db="EMBL/GenBank/DDBJ databases">
        <authorList>
            <consortium name="NIEHS SNPs program"/>
        </authorList>
    </citation>
    <scope>NUCLEOTIDE SEQUENCE [GENOMIC DNA]</scope>
    <scope>VARIANT THR-13</scope>
</reference>
<reference key="3">
    <citation type="journal article" date="2004" name="Nat. Genet.">
        <title>Complete sequencing and characterization of 21,243 full-length human cDNAs.</title>
        <authorList>
            <person name="Ota T."/>
            <person name="Suzuki Y."/>
            <person name="Nishikawa T."/>
            <person name="Otsuki T."/>
            <person name="Sugiyama T."/>
            <person name="Irie R."/>
            <person name="Wakamatsu A."/>
            <person name="Hayashi K."/>
            <person name="Sato H."/>
            <person name="Nagai K."/>
            <person name="Kimura K."/>
            <person name="Makita H."/>
            <person name="Sekine M."/>
            <person name="Obayashi M."/>
            <person name="Nishi T."/>
            <person name="Shibahara T."/>
            <person name="Tanaka T."/>
            <person name="Ishii S."/>
            <person name="Yamamoto J."/>
            <person name="Saito K."/>
            <person name="Kawai Y."/>
            <person name="Isono Y."/>
            <person name="Nakamura Y."/>
            <person name="Nagahari K."/>
            <person name="Murakami K."/>
            <person name="Yasuda T."/>
            <person name="Iwayanagi T."/>
            <person name="Wagatsuma M."/>
            <person name="Shiratori A."/>
            <person name="Sudo H."/>
            <person name="Hosoiri T."/>
            <person name="Kaku Y."/>
            <person name="Kodaira H."/>
            <person name="Kondo H."/>
            <person name="Sugawara M."/>
            <person name="Takahashi M."/>
            <person name="Kanda K."/>
            <person name="Yokoi T."/>
            <person name="Furuya T."/>
            <person name="Kikkawa E."/>
            <person name="Omura Y."/>
            <person name="Abe K."/>
            <person name="Kamihara K."/>
            <person name="Katsuta N."/>
            <person name="Sato K."/>
            <person name="Tanikawa M."/>
            <person name="Yamazaki M."/>
            <person name="Ninomiya K."/>
            <person name="Ishibashi T."/>
            <person name="Yamashita H."/>
            <person name="Murakawa K."/>
            <person name="Fujimori K."/>
            <person name="Tanai H."/>
            <person name="Kimata M."/>
            <person name="Watanabe M."/>
            <person name="Hiraoka S."/>
            <person name="Chiba Y."/>
            <person name="Ishida S."/>
            <person name="Ono Y."/>
            <person name="Takiguchi S."/>
            <person name="Watanabe S."/>
            <person name="Yosida M."/>
            <person name="Hotuta T."/>
            <person name="Kusano J."/>
            <person name="Kanehori K."/>
            <person name="Takahashi-Fujii A."/>
            <person name="Hara H."/>
            <person name="Tanase T.-O."/>
            <person name="Nomura Y."/>
            <person name="Togiya S."/>
            <person name="Komai F."/>
            <person name="Hara R."/>
            <person name="Takeuchi K."/>
            <person name="Arita M."/>
            <person name="Imose N."/>
            <person name="Musashino K."/>
            <person name="Yuuki H."/>
            <person name="Oshima A."/>
            <person name="Sasaki N."/>
            <person name="Aotsuka S."/>
            <person name="Yoshikawa Y."/>
            <person name="Matsunawa H."/>
            <person name="Ichihara T."/>
            <person name="Shiohata N."/>
            <person name="Sano S."/>
            <person name="Moriya S."/>
            <person name="Momiyama H."/>
            <person name="Satoh N."/>
            <person name="Takami S."/>
            <person name="Terashima Y."/>
            <person name="Suzuki O."/>
            <person name="Nakagawa S."/>
            <person name="Senoh A."/>
            <person name="Mizoguchi H."/>
            <person name="Goto Y."/>
            <person name="Shimizu F."/>
            <person name="Wakebe H."/>
            <person name="Hishigaki H."/>
            <person name="Watanabe T."/>
            <person name="Sugiyama A."/>
            <person name="Takemoto M."/>
            <person name="Kawakami B."/>
            <person name="Yamazaki M."/>
            <person name="Watanabe K."/>
            <person name="Kumagai A."/>
            <person name="Itakura S."/>
            <person name="Fukuzumi Y."/>
            <person name="Fujimori Y."/>
            <person name="Komiyama M."/>
            <person name="Tashiro H."/>
            <person name="Tanigami A."/>
            <person name="Fujiwara T."/>
            <person name="Ono T."/>
            <person name="Yamada K."/>
            <person name="Fujii Y."/>
            <person name="Ozaki K."/>
            <person name="Hirao M."/>
            <person name="Ohmori Y."/>
            <person name="Kawabata A."/>
            <person name="Hikiji T."/>
            <person name="Kobatake N."/>
            <person name="Inagaki H."/>
            <person name="Ikema Y."/>
            <person name="Okamoto S."/>
            <person name="Okitani R."/>
            <person name="Kawakami T."/>
            <person name="Noguchi S."/>
            <person name="Itoh T."/>
            <person name="Shigeta K."/>
            <person name="Senba T."/>
            <person name="Matsumura K."/>
            <person name="Nakajima Y."/>
            <person name="Mizuno T."/>
            <person name="Morinaga M."/>
            <person name="Sasaki M."/>
            <person name="Togashi T."/>
            <person name="Oyama M."/>
            <person name="Hata H."/>
            <person name="Watanabe M."/>
            <person name="Komatsu T."/>
            <person name="Mizushima-Sugano J."/>
            <person name="Satoh T."/>
            <person name="Shirai Y."/>
            <person name="Takahashi Y."/>
            <person name="Nakagawa K."/>
            <person name="Okumura K."/>
            <person name="Nagase T."/>
            <person name="Nomura N."/>
            <person name="Kikuchi H."/>
            <person name="Masuho Y."/>
            <person name="Yamashita R."/>
            <person name="Nakai K."/>
            <person name="Yada T."/>
            <person name="Nakamura Y."/>
            <person name="Ohara O."/>
            <person name="Isogai T."/>
            <person name="Sugano S."/>
        </authorList>
    </citation>
    <scope>NUCLEOTIDE SEQUENCE [LARGE SCALE MRNA] (ISOFORM 2)</scope>
    <source>
        <tissue>Amygdala</tissue>
    </source>
</reference>
<reference key="4">
    <citation type="journal article" date="2006" name="Nature">
        <title>The finished DNA sequence of human chromosome 12.</title>
        <authorList>
            <person name="Scherer S.E."/>
            <person name="Muzny D.M."/>
            <person name="Buhay C.J."/>
            <person name="Chen R."/>
            <person name="Cree A."/>
            <person name="Ding Y."/>
            <person name="Dugan-Rocha S."/>
            <person name="Gill R."/>
            <person name="Gunaratne P."/>
            <person name="Harris R.A."/>
            <person name="Hawes A.C."/>
            <person name="Hernandez J."/>
            <person name="Hodgson A.V."/>
            <person name="Hume J."/>
            <person name="Jackson A."/>
            <person name="Khan Z.M."/>
            <person name="Kovar-Smith C."/>
            <person name="Lewis L.R."/>
            <person name="Lozado R.J."/>
            <person name="Metzker M.L."/>
            <person name="Milosavljevic A."/>
            <person name="Miner G.R."/>
            <person name="Montgomery K.T."/>
            <person name="Morgan M.B."/>
            <person name="Nazareth L.V."/>
            <person name="Scott G."/>
            <person name="Sodergren E."/>
            <person name="Song X.-Z."/>
            <person name="Steffen D."/>
            <person name="Lovering R.C."/>
            <person name="Wheeler D.A."/>
            <person name="Worley K.C."/>
            <person name="Yuan Y."/>
            <person name="Zhang Z."/>
            <person name="Adams C.Q."/>
            <person name="Ansari-Lari M.A."/>
            <person name="Ayele M."/>
            <person name="Brown M.J."/>
            <person name="Chen G."/>
            <person name="Chen Z."/>
            <person name="Clerc-Blankenburg K.P."/>
            <person name="Davis C."/>
            <person name="Delgado O."/>
            <person name="Dinh H.H."/>
            <person name="Draper H."/>
            <person name="Gonzalez-Garay M.L."/>
            <person name="Havlak P."/>
            <person name="Jackson L.R."/>
            <person name="Jacob L.S."/>
            <person name="Kelly S.H."/>
            <person name="Li L."/>
            <person name="Li Z."/>
            <person name="Liu J."/>
            <person name="Liu W."/>
            <person name="Lu J."/>
            <person name="Maheshwari M."/>
            <person name="Nguyen B.-V."/>
            <person name="Okwuonu G.O."/>
            <person name="Pasternak S."/>
            <person name="Perez L.M."/>
            <person name="Plopper F.J.H."/>
            <person name="Santibanez J."/>
            <person name="Shen H."/>
            <person name="Tabor P.E."/>
            <person name="Verduzco D."/>
            <person name="Waldron L."/>
            <person name="Wang Q."/>
            <person name="Williams G.A."/>
            <person name="Zhang J."/>
            <person name="Zhou J."/>
            <person name="Allen C.C."/>
            <person name="Amin A.G."/>
            <person name="Anyalebechi V."/>
            <person name="Bailey M."/>
            <person name="Barbaria J.A."/>
            <person name="Bimage K.E."/>
            <person name="Bryant N.P."/>
            <person name="Burch P.E."/>
            <person name="Burkett C.E."/>
            <person name="Burrell K.L."/>
            <person name="Calderon E."/>
            <person name="Cardenas V."/>
            <person name="Carter K."/>
            <person name="Casias K."/>
            <person name="Cavazos I."/>
            <person name="Cavazos S.R."/>
            <person name="Ceasar H."/>
            <person name="Chacko J."/>
            <person name="Chan S.N."/>
            <person name="Chavez D."/>
            <person name="Christopoulos C."/>
            <person name="Chu J."/>
            <person name="Cockrell R."/>
            <person name="Cox C.D."/>
            <person name="Dang M."/>
            <person name="Dathorne S.R."/>
            <person name="David R."/>
            <person name="Davis C.M."/>
            <person name="Davy-Carroll L."/>
            <person name="Deshazo D.R."/>
            <person name="Donlin J.E."/>
            <person name="D'Souza L."/>
            <person name="Eaves K.A."/>
            <person name="Egan A."/>
            <person name="Emery-Cohen A.J."/>
            <person name="Escotto M."/>
            <person name="Flagg N."/>
            <person name="Forbes L.D."/>
            <person name="Gabisi A.M."/>
            <person name="Garza M."/>
            <person name="Hamilton C."/>
            <person name="Henderson N."/>
            <person name="Hernandez O."/>
            <person name="Hines S."/>
            <person name="Hogues M.E."/>
            <person name="Huang M."/>
            <person name="Idlebird D.G."/>
            <person name="Johnson R."/>
            <person name="Jolivet A."/>
            <person name="Jones S."/>
            <person name="Kagan R."/>
            <person name="King L.M."/>
            <person name="Leal B."/>
            <person name="Lebow H."/>
            <person name="Lee S."/>
            <person name="LeVan J.M."/>
            <person name="Lewis L.C."/>
            <person name="London P."/>
            <person name="Lorensuhewa L.M."/>
            <person name="Loulseged H."/>
            <person name="Lovett D.A."/>
            <person name="Lucier A."/>
            <person name="Lucier R.L."/>
            <person name="Ma J."/>
            <person name="Madu R.C."/>
            <person name="Mapua P."/>
            <person name="Martindale A.D."/>
            <person name="Martinez E."/>
            <person name="Massey E."/>
            <person name="Mawhiney S."/>
            <person name="Meador M.G."/>
            <person name="Mendez S."/>
            <person name="Mercado C."/>
            <person name="Mercado I.C."/>
            <person name="Merritt C.E."/>
            <person name="Miner Z.L."/>
            <person name="Minja E."/>
            <person name="Mitchell T."/>
            <person name="Mohabbat F."/>
            <person name="Mohabbat K."/>
            <person name="Montgomery B."/>
            <person name="Moore N."/>
            <person name="Morris S."/>
            <person name="Munidasa M."/>
            <person name="Ngo R.N."/>
            <person name="Nguyen N.B."/>
            <person name="Nickerson E."/>
            <person name="Nwaokelemeh O.O."/>
            <person name="Nwokenkwo S."/>
            <person name="Obregon M."/>
            <person name="Oguh M."/>
            <person name="Oragunye N."/>
            <person name="Oviedo R.J."/>
            <person name="Parish B.J."/>
            <person name="Parker D.N."/>
            <person name="Parrish J."/>
            <person name="Parks K.L."/>
            <person name="Paul H.A."/>
            <person name="Payton B.A."/>
            <person name="Perez A."/>
            <person name="Perrin W."/>
            <person name="Pickens A."/>
            <person name="Primus E.L."/>
            <person name="Pu L.-L."/>
            <person name="Puazo M."/>
            <person name="Quiles M.M."/>
            <person name="Quiroz J.B."/>
            <person name="Rabata D."/>
            <person name="Reeves K."/>
            <person name="Ruiz S.J."/>
            <person name="Shao H."/>
            <person name="Sisson I."/>
            <person name="Sonaike T."/>
            <person name="Sorelle R.P."/>
            <person name="Sutton A.E."/>
            <person name="Svatek A.F."/>
            <person name="Svetz L.A."/>
            <person name="Tamerisa K.S."/>
            <person name="Taylor T.R."/>
            <person name="Teague B."/>
            <person name="Thomas N."/>
            <person name="Thorn R.D."/>
            <person name="Trejos Z.Y."/>
            <person name="Trevino B.K."/>
            <person name="Ukegbu O.N."/>
            <person name="Urban J.B."/>
            <person name="Vasquez L.I."/>
            <person name="Vera V.A."/>
            <person name="Villasana D.M."/>
            <person name="Wang L."/>
            <person name="Ward-Moore S."/>
            <person name="Warren J.T."/>
            <person name="Wei X."/>
            <person name="White F."/>
            <person name="Williamson A.L."/>
            <person name="Wleczyk R."/>
            <person name="Wooden H.S."/>
            <person name="Wooden S.H."/>
            <person name="Yen J."/>
            <person name="Yoon L."/>
            <person name="Yoon V."/>
            <person name="Zorrilla S.E."/>
            <person name="Nelson D."/>
            <person name="Kucherlapati R."/>
            <person name="Weinstock G."/>
            <person name="Gibbs R.A."/>
        </authorList>
    </citation>
    <scope>NUCLEOTIDE SEQUENCE [LARGE SCALE GENOMIC DNA]</scope>
</reference>
<reference key="5">
    <citation type="journal article" date="2004" name="Genome Res.">
        <title>The status, quality, and expansion of the NIH full-length cDNA project: the Mammalian Gene Collection (MGC).</title>
        <authorList>
            <consortium name="The MGC Project Team"/>
        </authorList>
    </citation>
    <scope>NUCLEOTIDE SEQUENCE [LARGE SCALE MRNA] (ISOFORM 1)</scope>
    <source>
        <tissue>Muscle</tissue>
        <tissue>Skin</tissue>
    </source>
</reference>
<reference key="6">
    <citation type="journal article" date="1997" name="J. Biol. Chem.">
        <title>Replication factor C interacts with the C-terminal side of proliferating cell nuclear antigen.</title>
        <authorList>
            <person name="Mossi R."/>
            <person name="Jonsson Z.O."/>
            <person name="Allen B.L."/>
            <person name="Hardin S.H."/>
            <person name="Huebscher U."/>
        </authorList>
    </citation>
    <scope>FUNCTION</scope>
    <scope>INTERACTION WITH PCNA</scope>
</reference>
<reference key="7">
    <citation type="journal article" date="1998" name="J. Biol. Chem.">
        <title>Reconstitution of recombinant human replication factor C (RFC) and identification of an RFC subcomplex possessing DNA-dependent ATPase activity.</title>
        <authorList>
            <person name="Ellison V."/>
            <person name="Stillman B."/>
        </authorList>
    </citation>
    <scope>FUNCTION</scope>
    <scope>SUBUNIT</scope>
</reference>
<reference key="8">
    <citation type="journal article" date="2001" name="Proc. Natl. Acad. Sci. U.S.A.">
        <title>Purification and characterization of human DNA damage checkpoint Rad complexes.</title>
        <authorList>
            <person name="Lindsey-Boltz L.A."/>
            <person name="Bermudez V.P."/>
            <person name="Hurwitz J."/>
            <person name="Sancar A."/>
        </authorList>
    </citation>
    <scope>INTERACTION WITH RAD17</scope>
</reference>
<reference key="9">
    <citation type="journal article" date="2011" name="BMC Syst. Biol.">
        <title>Initial characterization of the human central proteome.</title>
        <authorList>
            <person name="Burkard T.R."/>
            <person name="Planyavsky M."/>
            <person name="Kaupe I."/>
            <person name="Breitwieser F.P."/>
            <person name="Buerckstuemmer T."/>
            <person name="Bennett K.L."/>
            <person name="Superti-Furga G."/>
            <person name="Colinge J."/>
        </authorList>
    </citation>
    <scope>IDENTIFICATION BY MASS SPECTROMETRY [LARGE SCALE ANALYSIS]</scope>
</reference>
<reference key="10">
    <citation type="journal article" date="2012" name="Proc. Natl. Acad. Sci. U.S.A.">
        <title>N-terminal acetylome analyses and functional insights of the N-terminal acetyltransferase NatB.</title>
        <authorList>
            <person name="Van Damme P."/>
            <person name="Lasa M."/>
            <person name="Polevoda B."/>
            <person name="Gazquez C."/>
            <person name="Elosegui-Artola A."/>
            <person name="Kim D.S."/>
            <person name="De Juan-Pardo E."/>
            <person name="Demeyer K."/>
            <person name="Hole K."/>
            <person name="Larrea E."/>
            <person name="Timmerman E."/>
            <person name="Prieto J."/>
            <person name="Arnesen T."/>
            <person name="Sherman F."/>
            <person name="Gevaert K."/>
            <person name="Aldabe R."/>
        </authorList>
    </citation>
    <scope>ACETYLATION [LARGE SCALE ANALYSIS] AT MET-1</scope>
    <scope>IDENTIFICATION BY MASS SPECTROMETRY [LARGE SCALE ANALYSIS]</scope>
</reference>
<reference key="11">
    <citation type="journal article" date="2014" name="J. Proteomics">
        <title>An enzyme assisted RP-RPLC approach for in-depth analysis of human liver phosphoproteome.</title>
        <authorList>
            <person name="Bian Y."/>
            <person name="Song C."/>
            <person name="Cheng K."/>
            <person name="Dong M."/>
            <person name="Wang F."/>
            <person name="Huang J."/>
            <person name="Sun D."/>
            <person name="Wang L."/>
            <person name="Ye M."/>
            <person name="Zou H."/>
        </authorList>
    </citation>
    <scope>IDENTIFICATION BY MASS SPECTROMETRY [LARGE SCALE ANALYSIS]</scope>
    <source>
        <tissue>Liver</tissue>
    </source>
</reference>
<sequence length="340" mass="38497">METSALKQQEQPAATKIRNLPWVEKYRPQTLNDLISHQDILSTIQKFINEDRLPHLLLYGPPGTGKTSTILACAKQLYKDKEFGSMVLELNASDDRGIDIIRGPILSFASTRTIFKKGFKLVILDEADAMTQDAQNALRRVIEKFTENTRFCLICNYLSKIIPALQSRCTRFRFGPLTPELMVPRLEHVVEEEKVDISEDGMKALVTLSSGDMRRALNILQSTNMAFGKVTEETVYTCTGHPLKSDIANILDWMLNQDFTTAYRNITELKTLKGLALHDILTEIHLFVHRVDFPSSVRIHLLTKMADIEYRLSVGTNEKIQLSSLIAAFQVTRDLIVAEA</sequence>